<name>KDPC_CLOBB</name>
<comment type="function">
    <text evidence="1">Part of the high-affinity ATP-driven potassium transport (or Kdp) system, which catalyzes the hydrolysis of ATP coupled with the electrogenic transport of potassium into the cytoplasm. This subunit acts as a catalytic chaperone that increases the ATP-binding affinity of the ATP-hydrolyzing subunit KdpB by the formation of a transient KdpB/KdpC/ATP ternary complex.</text>
</comment>
<comment type="subunit">
    <text evidence="1">The system is composed of three essential subunits: KdpA, KdpB and KdpC.</text>
</comment>
<comment type="subcellular location">
    <subcellularLocation>
        <location evidence="1">Cell membrane</location>
        <topology evidence="1">Single-pass membrane protein</topology>
    </subcellularLocation>
</comment>
<comment type="similarity">
    <text evidence="1">Belongs to the KdpC family.</text>
</comment>
<accession>B2TMJ3</accession>
<organism>
    <name type="scientific">Clostridium botulinum (strain Eklund 17B / Type B)</name>
    <dbReference type="NCBI Taxonomy" id="935198"/>
    <lineage>
        <taxon>Bacteria</taxon>
        <taxon>Bacillati</taxon>
        <taxon>Bacillota</taxon>
        <taxon>Clostridia</taxon>
        <taxon>Eubacteriales</taxon>
        <taxon>Clostridiaceae</taxon>
        <taxon>Clostridium</taxon>
    </lineage>
</organism>
<reference key="1">
    <citation type="submission" date="2008-04" db="EMBL/GenBank/DDBJ databases">
        <title>Complete sequence of Clostridium botulinum strain Eklund.</title>
        <authorList>
            <person name="Brinkac L.M."/>
            <person name="Brown J.L."/>
            <person name="Bruce D."/>
            <person name="Detter C."/>
            <person name="Munk C."/>
            <person name="Smith L.A."/>
            <person name="Smith T.J."/>
            <person name="Sutton G."/>
            <person name="Brettin T.S."/>
        </authorList>
    </citation>
    <scope>NUCLEOTIDE SEQUENCE [LARGE SCALE GENOMIC DNA]</scope>
    <source>
        <strain>Eklund 17B / Type B</strain>
    </source>
</reference>
<feature type="chain" id="PRO_1000114720" description="Potassium-transporting ATPase KdpC subunit">
    <location>
        <begin position="1"/>
        <end position="201"/>
    </location>
</feature>
<feature type="transmembrane region" description="Helical" evidence="1">
    <location>
        <begin position="13"/>
        <end position="33"/>
    </location>
</feature>
<dbReference type="EMBL" id="CP001056">
    <property type="protein sequence ID" value="ACD24086.1"/>
    <property type="molecule type" value="Genomic_DNA"/>
</dbReference>
<dbReference type="SMR" id="B2TMJ3"/>
<dbReference type="KEGG" id="cbk:CLL_A0980"/>
<dbReference type="PATRIC" id="fig|935198.13.peg.930"/>
<dbReference type="HOGENOM" id="CLU_077094_2_0_9"/>
<dbReference type="Proteomes" id="UP000001195">
    <property type="component" value="Chromosome"/>
</dbReference>
<dbReference type="GO" id="GO:0005886">
    <property type="term" value="C:plasma membrane"/>
    <property type="evidence" value="ECO:0007669"/>
    <property type="project" value="UniProtKB-SubCell"/>
</dbReference>
<dbReference type="GO" id="GO:0005524">
    <property type="term" value="F:ATP binding"/>
    <property type="evidence" value="ECO:0007669"/>
    <property type="project" value="UniProtKB-UniRule"/>
</dbReference>
<dbReference type="GO" id="GO:0008556">
    <property type="term" value="F:P-type potassium transmembrane transporter activity"/>
    <property type="evidence" value="ECO:0007669"/>
    <property type="project" value="InterPro"/>
</dbReference>
<dbReference type="HAMAP" id="MF_00276">
    <property type="entry name" value="KdpC"/>
    <property type="match status" value="1"/>
</dbReference>
<dbReference type="InterPro" id="IPR003820">
    <property type="entry name" value="KdpC"/>
</dbReference>
<dbReference type="NCBIfam" id="TIGR00681">
    <property type="entry name" value="kdpC"/>
    <property type="match status" value="1"/>
</dbReference>
<dbReference type="NCBIfam" id="NF001454">
    <property type="entry name" value="PRK00315.1"/>
    <property type="match status" value="1"/>
</dbReference>
<dbReference type="PANTHER" id="PTHR30042">
    <property type="entry name" value="POTASSIUM-TRANSPORTING ATPASE C CHAIN"/>
    <property type="match status" value="1"/>
</dbReference>
<dbReference type="PANTHER" id="PTHR30042:SF2">
    <property type="entry name" value="POTASSIUM-TRANSPORTING ATPASE KDPC SUBUNIT"/>
    <property type="match status" value="1"/>
</dbReference>
<dbReference type="Pfam" id="PF02669">
    <property type="entry name" value="KdpC"/>
    <property type="match status" value="1"/>
</dbReference>
<dbReference type="PIRSF" id="PIRSF001296">
    <property type="entry name" value="K_ATPase_KdpC"/>
    <property type="match status" value="1"/>
</dbReference>
<protein>
    <recommendedName>
        <fullName evidence="1">Potassium-transporting ATPase KdpC subunit</fullName>
    </recommendedName>
    <alternativeName>
        <fullName evidence="1">ATP phosphohydrolase [potassium-transporting] C chain</fullName>
    </alternativeName>
    <alternativeName>
        <fullName evidence="1">Potassium-binding and translocating subunit C</fullName>
    </alternativeName>
    <alternativeName>
        <fullName evidence="1">Potassium-translocating ATPase C chain</fullName>
    </alternativeName>
</protein>
<proteinExistence type="inferred from homology"/>
<evidence type="ECO:0000255" key="1">
    <source>
        <dbReference type="HAMAP-Rule" id="MF_00276"/>
    </source>
</evidence>
<sequence>MKEFKAVFPKALIIFMIFTILCGGIYTIFITGISQLIFPKQANGSIIEVNGKKYGSVLLAQQYNDEKHLWGRIMNIDTDTFVDDNGKKLAYSAPSNLSPASKEYEALVKERVDKIKANHPEQDDKAIPVDLVTCSGSGLDPHISVAAAKYQVNRIAKNNNMKIKDVEKIIDKYTSGKLFGVLGEKTVNVLEVNLAIDGILK</sequence>
<gene>
    <name evidence="1" type="primary">kdpC</name>
    <name type="ordered locus">CLL_A0980</name>
</gene>
<keyword id="KW-0067">ATP-binding</keyword>
<keyword id="KW-1003">Cell membrane</keyword>
<keyword id="KW-0406">Ion transport</keyword>
<keyword id="KW-0472">Membrane</keyword>
<keyword id="KW-0547">Nucleotide-binding</keyword>
<keyword id="KW-0630">Potassium</keyword>
<keyword id="KW-0633">Potassium transport</keyword>
<keyword id="KW-0812">Transmembrane</keyword>
<keyword id="KW-1133">Transmembrane helix</keyword>
<keyword id="KW-0813">Transport</keyword>